<reference key="1">
    <citation type="journal article" date="2009" name="Proc. Natl. Acad. Sci. U.S.A.">
        <title>Biogeography of the Sulfolobus islandicus pan-genome.</title>
        <authorList>
            <person name="Reno M.L."/>
            <person name="Held N.L."/>
            <person name="Fields C.J."/>
            <person name="Burke P.V."/>
            <person name="Whitaker R.J."/>
        </authorList>
    </citation>
    <scope>NUCLEOTIDE SEQUENCE [LARGE SCALE GENOMIC DNA]</scope>
    <source>
        <strain>Y.N.15.51 / Yellowstone #2</strain>
    </source>
</reference>
<keyword id="KW-0963">Cytoplasm</keyword>
<keyword id="KW-0255">Endonuclease</keyword>
<keyword id="KW-0378">Hydrolase</keyword>
<keyword id="KW-0479">Metal-binding</keyword>
<keyword id="KW-0540">Nuclease</keyword>
<keyword id="KW-0819">tRNA processing</keyword>
<keyword id="KW-0862">Zinc</keyword>
<protein>
    <recommendedName>
        <fullName evidence="1">Ribonuclease P protein component 4</fullName>
        <shortName evidence="1">RNase P component 4</shortName>
        <ecNumber evidence="1">3.1.26.5</ecNumber>
    </recommendedName>
    <alternativeName>
        <fullName evidence="1">Rpp21</fullName>
    </alternativeName>
</protein>
<organism>
    <name type="scientific">Saccharolobus islandicus (strain Y.N.15.51 / Yellowstone #2)</name>
    <name type="common">Sulfolobus islandicus</name>
    <dbReference type="NCBI Taxonomy" id="419942"/>
    <lineage>
        <taxon>Archaea</taxon>
        <taxon>Thermoproteota</taxon>
        <taxon>Thermoprotei</taxon>
        <taxon>Sulfolobales</taxon>
        <taxon>Sulfolobaceae</taxon>
        <taxon>Saccharolobus</taxon>
    </lineage>
</organism>
<feature type="chain" id="PRO_1000212866" description="Ribonuclease P protein component 4">
    <location>
        <begin position="1"/>
        <end position="104"/>
    </location>
</feature>
<feature type="binding site" evidence="1">
    <location>
        <position position="57"/>
    </location>
    <ligand>
        <name>Zn(2+)</name>
        <dbReference type="ChEBI" id="CHEBI:29105"/>
    </ligand>
</feature>
<feature type="binding site" evidence="1">
    <location>
        <position position="60"/>
    </location>
    <ligand>
        <name>Zn(2+)</name>
        <dbReference type="ChEBI" id="CHEBI:29105"/>
    </ligand>
</feature>
<feature type="binding site" evidence="1">
    <location>
        <position position="83"/>
    </location>
    <ligand>
        <name>Zn(2+)</name>
        <dbReference type="ChEBI" id="CHEBI:29105"/>
    </ligand>
</feature>
<feature type="binding site" evidence="1">
    <location>
        <position position="86"/>
    </location>
    <ligand>
        <name>Zn(2+)</name>
        <dbReference type="ChEBI" id="CHEBI:29105"/>
    </ligand>
</feature>
<gene>
    <name evidence="1" type="primary">rnp4</name>
    <name type="ordered locus">YN1551_0042</name>
</gene>
<comment type="function">
    <text evidence="1">Part of ribonuclease P, a protein complex that generates mature tRNA molecules by cleaving their 5'-ends.</text>
</comment>
<comment type="catalytic activity">
    <reaction evidence="1">
        <text>Endonucleolytic cleavage of RNA, removing 5'-extranucleotides from tRNA precursor.</text>
        <dbReference type="EC" id="3.1.26.5"/>
    </reaction>
</comment>
<comment type="cofactor">
    <cofactor evidence="1">
        <name>Zn(2+)</name>
        <dbReference type="ChEBI" id="CHEBI:29105"/>
    </cofactor>
    <text evidence="1">Binds 1 zinc ion per subunit.</text>
</comment>
<comment type="subunit">
    <text evidence="1">Consists of a catalytic RNA component and at least 4-5 protein subunits.</text>
</comment>
<comment type="subcellular location">
    <subcellularLocation>
        <location evidence="1">Cytoplasm</location>
    </subcellularLocation>
</comment>
<comment type="similarity">
    <text evidence="1">Belongs to the eukaryotic/archaeal RNase P protein component 4 family.</text>
</comment>
<dbReference type="EC" id="3.1.26.5" evidence="1"/>
<dbReference type="EMBL" id="CP001404">
    <property type="protein sequence ID" value="ACP47241.1"/>
    <property type="molecule type" value="Genomic_DNA"/>
</dbReference>
<dbReference type="RefSeq" id="WP_012712725.1">
    <property type="nucleotide sequence ID" value="NC_012623.1"/>
</dbReference>
<dbReference type="SMR" id="C3NJ74"/>
<dbReference type="GeneID" id="7808942"/>
<dbReference type="KEGG" id="sin:YN1551_0042"/>
<dbReference type="HOGENOM" id="CLU_079140_3_1_2"/>
<dbReference type="Proteomes" id="UP000006818">
    <property type="component" value="Chromosome"/>
</dbReference>
<dbReference type="GO" id="GO:0005737">
    <property type="term" value="C:cytoplasm"/>
    <property type="evidence" value="ECO:0007669"/>
    <property type="project" value="UniProtKB-SubCell"/>
</dbReference>
<dbReference type="GO" id="GO:0030677">
    <property type="term" value="C:ribonuclease P complex"/>
    <property type="evidence" value="ECO:0007669"/>
    <property type="project" value="UniProtKB-UniRule"/>
</dbReference>
<dbReference type="GO" id="GO:0004526">
    <property type="term" value="F:ribonuclease P activity"/>
    <property type="evidence" value="ECO:0007669"/>
    <property type="project" value="UniProtKB-UniRule"/>
</dbReference>
<dbReference type="GO" id="GO:0008270">
    <property type="term" value="F:zinc ion binding"/>
    <property type="evidence" value="ECO:0007669"/>
    <property type="project" value="UniProtKB-UniRule"/>
</dbReference>
<dbReference type="GO" id="GO:0001682">
    <property type="term" value="P:tRNA 5'-leader removal"/>
    <property type="evidence" value="ECO:0007669"/>
    <property type="project" value="UniProtKB-UniRule"/>
</dbReference>
<dbReference type="Gene3D" id="6.20.50.20">
    <property type="match status" value="1"/>
</dbReference>
<dbReference type="Gene3D" id="1.20.5.420">
    <property type="entry name" value="Immunoglobulin FC, subunit C"/>
    <property type="match status" value="1"/>
</dbReference>
<dbReference type="HAMAP" id="MF_00757">
    <property type="entry name" value="RNase_P_4"/>
    <property type="match status" value="1"/>
</dbReference>
<dbReference type="InterPro" id="IPR016432">
    <property type="entry name" value="RNP4"/>
</dbReference>
<dbReference type="InterPro" id="IPR007175">
    <property type="entry name" value="Rpr2/Snm1/Rpp21"/>
</dbReference>
<dbReference type="PANTHER" id="PTHR14742:SF0">
    <property type="entry name" value="RIBONUCLEASE P PROTEIN SUBUNIT P21"/>
    <property type="match status" value="1"/>
</dbReference>
<dbReference type="PANTHER" id="PTHR14742">
    <property type="entry name" value="RIBONUCLEASE P SUBUNIT P21"/>
    <property type="match status" value="1"/>
</dbReference>
<dbReference type="Pfam" id="PF04032">
    <property type="entry name" value="Rpr2"/>
    <property type="match status" value="1"/>
</dbReference>
<dbReference type="PIRSF" id="PIRSF004878">
    <property type="entry name" value="RNase_P_4"/>
    <property type="match status" value="1"/>
</dbReference>
<name>RNP4_SACI1</name>
<evidence type="ECO:0000255" key="1">
    <source>
        <dbReference type="HAMAP-Rule" id="MF_00757"/>
    </source>
</evidence>
<accession>C3NJ74</accession>
<proteinExistence type="inferred from homology"/>
<sequence length="104" mass="12622">MRIKNKIKKRIIELIELAYITARKGDLELAREYIKLAEMYSRKGRIKIPLKYKRMFCRKCYTPLITGVTERRRIRSKILIRTCLICNWQRRYVLSRNKGSNKEN</sequence>